<organism>
    <name type="scientific">Acidithiobacillus ferrooxidans (strain ATCC 53993 / BNL-5-31)</name>
    <name type="common">Leptospirillum ferrooxidans (ATCC 53993)</name>
    <dbReference type="NCBI Taxonomy" id="380394"/>
    <lineage>
        <taxon>Bacteria</taxon>
        <taxon>Pseudomonadati</taxon>
        <taxon>Pseudomonadota</taxon>
        <taxon>Acidithiobacillia</taxon>
        <taxon>Acidithiobacillales</taxon>
        <taxon>Acidithiobacillaceae</taxon>
        <taxon>Acidithiobacillus</taxon>
    </lineage>
</organism>
<proteinExistence type="inferred from homology"/>
<feature type="chain" id="PRO_1000192243" description="Nucleoside diphosphate kinase">
    <location>
        <begin position="1"/>
        <end position="141"/>
    </location>
</feature>
<feature type="active site" description="Pros-phosphohistidine intermediate" evidence="1">
    <location>
        <position position="117"/>
    </location>
</feature>
<feature type="binding site" evidence="1">
    <location>
        <position position="11"/>
    </location>
    <ligand>
        <name>ATP</name>
        <dbReference type="ChEBI" id="CHEBI:30616"/>
    </ligand>
</feature>
<feature type="binding site" evidence="1">
    <location>
        <position position="59"/>
    </location>
    <ligand>
        <name>ATP</name>
        <dbReference type="ChEBI" id="CHEBI:30616"/>
    </ligand>
</feature>
<feature type="binding site" evidence="1">
    <location>
        <position position="87"/>
    </location>
    <ligand>
        <name>ATP</name>
        <dbReference type="ChEBI" id="CHEBI:30616"/>
    </ligand>
</feature>
<feature type="binding site" evidence="1">
    <location>
        <position position="93"/>
    </location>
    <ligand>
        <name>ATP</name>
        <dbReference type="ChEBI" id="CHEBI:30616"/>
    </ligand>
</feature>
<feature type="binding site" evidence="1">
    <location>
        <position position="104"/>
    </location>
    <ligand>
        <name>ATP</name>
        <dbReference type="ChEBI" id="CHEBI:30616"/>
    </ligand>
</feature>
<feature type="binding site" evidence="1">
    <location>
        <position position="114"/>
    </location>
    <ligand>
        <name>ATP</name>
        <dbReference type="ChEBI" id="CHEBI:30616"/>
    </ligand>
</feature>
<accession>B5EJE9</accession>
<dbReference type="EC" id="2.7.4.6" evidence="1"/>
<dbReference type="EMBL" id="CP001132">
    <property type="protein sequence ID" value="ACH83823.1"/>
    <property type="molecule type" value="Genomic_DNA"/>
</dbReference>
<dbReference type="RefSeq" id="WP_009562412.1">
    <property type="nucleotide sequence ID" value="NC_011206.1"/>
</dbReference>
<dbReference type="SMR" id="B5EJE9"/>
<dbReference type="GeneID" id="65281082"/>
<dbReference type="KEGG" id="afe:Lferr_1601"/>
<dbReference type="eggNOG" id="COG0105">
    <property type="taxonomic scope" value="Bacteria"/>
</dbReference>
<dbReference type="HOGENOM" id="CLU_060216_8_1_6"/>
<dbReference type="GO" id="GO:0005737">
    <property type="term" value="C:cytoplasm"/>
    <property type="evidence" value="ECO:0007669"/>
    <property type="project" value="UniProtKB-SubCell"/>
</dbReference>
<dbReference type="GO" id="GO:0005524">
    <property type="term" value="F:ATP binding"/>
    <property type="evidence" value="ECO:0007669"/>
    <property type="project" value="UniProtKB-UniRule"/>
</dbReference>
<dbReference type="GO" id="GO:0046872">
    <property type="term" value="F:metal ion binding"/>
    <property type="evidence" value="ECO:0007669"/>
    <property type="project" value="UniProtKB-KW"/>
</dbReference>
<dbReference type="GO" id="GO:0004550">
    <property type="term" value="F:nucleoside diphosphate kinase activity"/>
    <property type="evidence" value="ECO:0007669"/>
    <property type="project" value="UniProtKB-UniRule"/>
</dbReference>
<dbReference type="GO" id="GO:0006241">
    <property type="term" value="P:CTP biosynthetic process"/>
    <property type="evidence" value="ECO:0007669"/>
    <property type="project" value="UniProtKB-UniRule"/>
</dbReference>
<dbReference type="GO" id="GO:0006183">
    <property type="term" value="P:GTP biosynthetic process"/>
    <property type="evidence" value="ECO:0007669"/>
    <property type="project" value="UniProtKB-UniRule"/>
</dbReference>
<dbReference type="GO" id="GO:0006228">
    <property type="term" value="P:UTP biosynthetic process"/>
    <property type="evidence" value="ECO:0007669"/>
    <property type="project" value="UniProtKB-UniRule"/>
</dbReference>
<dbReference type="CDD" id="cd04413">
    <property type="entry name" value="NDPk_I"/>
    <property type="match status" value="1"/>
</dbReference>
<dbReference type="FunFam" id="3.30.70.141:FF:000001">
    <property type="entry name" value="Nucleoside diphosphate kinase"/>
    <property type="match status" value="1"/>
</dbReference>
<dbReference type="Gene3D" id="3.30.70.141">
    <property type="entry name" value="Nucleoside diphosphate kinase-like domain"/>
    <property type="match status" value="1"/>
</dbReference>
<dbReference type="HAMAP" id="MF_00451">
    <property type="entry name" value="NDP_kinase"/>
    <property type="match status" value="1"/>
</dbReference>
<dbReference type="InterPro" id="IPR034907">
    <property type="entry name" value="NDK-like_dom"/>
</dbReference>
<dbReference type="InterPro" id="IPR036850">
    <property type="entry name" value="NDK-like_dom_sf"/>
</dbReference>
<dbReference type="InterPro" id="IPR001564">
    <property type="entry name" value="Nucleoside_diP_kinase"/>
</dbReference>
<dbReference type="NCBIfam" id="NF001908">
    <property type="entry name" value="PRK00668.1"/>
    <property type="match status" value="1"/>
</dbReference>
<dbReference type="PANTHER" id="PTHR11349">
    <property type="entry name" value="NUCLEOSIDE DIPHOSPHATE KINASE"/>
    <property type="match status" value="1"/>
</dbReference>
<dbReference type="Pfam" id="PF00334">
    <property type="entry name" value="NDK"/>
    <property type="match status" value="1"/>
</dbReference>
<dbReference type="PRINTS" id="PR01243">
    <property type="entry name" value="NUCDPKINASE"/>
</dbReference>
<dbReference type="SMART" id="SM00562">
    <property type="entry name" value="NDK"/>
    <property type="match status" value="1"/>
</dbReference>
<dbReference type="SUPFAM" id="SSF54919">
    <property type="entry name" value="Nucleoside diphosphate kinase, NDK"/>
    <property type="match status" value="1"/>
</dbReference>
<dbReference type="PROSITE" id="PS51374">
    <property type="entry name" value="NDPK_LIKE"/>
    <property type="match status" value="1"/>
</dbReference>
<name>NDK_ACIF5</name>
<protein>
    <recommendedName>
        <fullName evidence="1">Nucleoside diphosphate kinase</fullName>
        <shortName evidence="1">NDK</shortName>
        <shortName evidence="1">NDP kinase</shortName>
        <ecNumber evidence="1">2.7.4.6</ecNumber>
    </recommendedName>
    <alternativeName>
        <fullName evidence="1">Nucleoside-2-P kinase</fullName>
    </alternativeName>
</protein>
<sequence>MAVERTLSIIKPDAVQKNAIGAILGRFEKAGLRIAAAKMLHLSRDDAGGFYAVHQARPFYGELCDFMSSGPVLVTVLEGEGAIAKNRDLMGATNPKDAAAGTIRADFADSIDANAVHGSDSAETAAWEISYFFGQREIFAH</sequence>
<comment type="function">
    <text evidence="1">Major role in the synthesis of nucleoside triphosphates other than ATP. The ATP gamma phosphate is transferred to the NDP beta phosphate via a ping-pong mechanism, using a phosphorylated active-site intermediate.</text>
</comment>
<comment type="catalytic activity">
    <reaction evidence="1">
        <text>a 2'-deoxyribonucleoside 5'-diphosphate + ATP = a 2'-deoxyribonucleoside 5'-triphosphate + ADP</text>
        <dbReference type="Rhea" id="RHEA:44640"/>
        <dbReference type="ChEBI" id="CHEBI:30616"/>
        <dbReference type="ChEBI" id="CHEBI:61560"/>
        <dbReference type="ChEBI" id="CHEBI:73316"/>
        <dbReference type="ChEBI" id="CHEBI:456216"/>
        <dbReference type="EC" id="2.7.4.6"/>
    </reaction>
</comment>
<comment type="catalytic activity">
    <reaction evidence="1">
        <text>a ribonucleoside 5'-diphosphate + ATP = a ribonucleoside 5'-triphosphate + ADP</text>
        <dbReference type="Rhea" id="RHEA:18113"/>
        <dbReference type="ChEBI" id="CHEBI:30616"/>
        <dbReference type="ChEBI" id="CHEBI:57930"/>
        <dbReference type="ChEBI" id="CHEBI:61557"/>
        <dbReference type="ChEBI" id="CHEBI:456216"/>
        <dbReference type="EC" id="2.7.4.6"/>
    </reaction>
</comment>
<comment type="cofactor">
    <cofactor evidence="1">
        <name>Mg(2+)</name>
        <dbReference type="ChEBI" id="CHEBI:18420"/>
    </cofactor>
</comment>
<comment type="subunit">
    <text evidence="1">Homotetramer.</text>
</comment>
<comment type="subcellular location">
    <subcellularLocation>
        <location evidence="1">Cytoplasm</location>
    </subcellularLocation>
</comment>
<comment type="similarity">
    <text evidence="1">Belongs to the NDK family.</text>
</comment>
<evidence type="ECO:0000255" key="1">
    <source>
        <dbReference type="HAMAP-Rule" id="MF_00451"/>
    </source>
</evidence>
<keyword id="KW-0067">ATP-binding</keyword>
<keyword id="KW-0963">Cytoplasm</keyword>
<keyword id="KW-0418">Kinase</keyword>
<keyword id="KW-0460">Magnesium</keyword>
<keyword id="KW-0479">Metal-binding</keyword>
<keyword id="KW-0546">Nucleotide metabolism</keyword>
<keyword id="KW-0547">Nucleotide-binding</keyword>
<keyword id="KW-0597">Phosphoprotein</keyword>
<keyword id="KW-0808">Transferase</keyword>
<gene>
    <name evidence="1" type="primary">ndk</name>
    <name type="ordered locus">Lferr_1601</name>
</gene>
<reference key="1">
    <citation type="submission" date="2008-08" db="EMBL/GenBank/DDBJ databases">
        <title>Complete sequence of Acidithiobacillus ferrooxidans ATCC 53993.</title>
        <authorList>
            <person name="Lucas S."/>
            <person name="Copeland A."/>
            <person name="Lapidus A."/>
            <person name="Glavina del Rio T."/>
            <person name="Dalin E."/>
            <person name="Tice H."/>
            <person name="Bruce D."/>
            <person name="Goodwin L."/>
            <person name="Pitluck S."/>
            <person name="Sims D."/>
            <person name="Brettin T."/>
            <person name="Detter J.C."/>
            <person name="Han C."/>
            <person name="Kuske C.R."/>
            <person name="Larimer F."/>
            <person name="Land M."/>
            <person name="Hauser L."/>
            <person name="Kyrpides N."/>
            <person name="Lykidis A."/>
            <person name="Borole A.P."/>
        </authorList>
    </citation>
    <scope>NUCLEOTIDE SEQUENCE [LARGE SCALE GENOMIC DNA]</scope>
    <source>
        <strain>ATCC 53993 / BNL-5-31</strain>
    </source>
</reference>